<comment type="function">
    <text evidence="1">Functions by promoting the formation of the first peptide bond.</text>
</comment>
<comment type="subcellular location">
    <subcellularLocation>
        <location evidence="1">Cytoplasm</location>
    </subcellularLocation>
</comment>
<comment type="similarity">
    <text evidence="1">Belongs to the eIF-5A family.</text>
</comment>
<organism>
    <name type="scientific">Picrophilus torridus (strain ATCC 700027 / DSM 9790 / JCM 10055 / NBRC 100828 / KAW 2/3)</name>
    <dbReference type="NCBI Taxonomy" id="1122961"/>
    <lineage>
        <taxon>Archaea</taxon>
        <taxon>Methanobacteriati</taxon>
        <taxon>Thermoplasmatota</taxon>
        <taxon>Thermoplasmata</taxon>
        <taxon>Thermoplasmatales</taxon>
        <taxon>Picrophilaceae</taxon>
        <taxon>Picrophilus</taxon>
    </lineage>
</organism>
<reference key="1">
    <citation type="journal article" date="2004" name="Proc. Natl. Acad. Sci. U.S.A.">
        <title>Genome sequence of Picrophilus torridus and its implications for life around pH 0.</title>
        <authorList>
            <person name="Fuetterer O."/>
            <person name="Angelov A."/>
            <person name="Liesegang H."/>
            <person name="Gottschalk G."/>
            <person name="Schleper C."/>
            <person name="Schepers B."/>
            <person name="Dock C."/>
            <person name="Antranikian G."/>
            <person name="Liebl W."/>
        </authorList>
    </citation>
    <scope>NUCLEOTIDE SEQUENCE [LARGE SCALE GENOMIC DNA]</scope>
    <source>
        <strain>ATCC 700027 / DSM 9790 / JCM 10055 / NBRC 100828 / KAW 2/3</strain>
    </source>
</reference>
<accession>Q6L150</accession>
<evidence type="ECO:0000255" key="1">
    <source>
        <dbReference type="HAMAP-Rule" id="MF_00085"/>
    </source>
</evidence>
<keyword id="KW-0963">Cytoplasm</keyword>
<keyword id="KW-0385">Hypusine</keyword>
<keyword id="KW-0396">Initiation factor</keyword>
<keyword id="KW-0648">Protein biosynthesis</keyword>
<gene>
    <name evidence="1" type="primary">eif5a</name>
    <name type="ordered locus">PTO0717</name>
</gene>
<sequence length="129" mass="14590">MSWTEAEVRELKVGRYILIDDSPCRIVDITMSKPGKHGEAKGRIVAIGVFDNQKHSVVYPVKHKVKVPVITKKNAQVLSIANNEVQLMDSETFETFVIPVDPADLEKIKPGMEVPYWEAMGQRKIMLQN</sequence>
<name>IF5A_PICTO</name>
<protein>
    <recommendedName>
        <fullName evidence="1">Translation initiation factor 5A</fullName>
    </recommendedName>
    <alternativeName>
        <fullName evidence="1">Hypusine-containing protein</fullName>
    </alternativeName>
    <alternativeName>
        <fullName evidence="1">eIF-5A</fullName>
    </alternativeName>
</protein>
<dbReference type="EMBL" id="AE017261">
    <property type="protein sequence ID" value="AAT43302.1"/>
    <property type="molecule type" value="Genomic_DNA"/>
</dbReference>
<dbReference type="RefSeq" id="WP_011177518.1">
    <property type="nucleotide sequence ID" value="NC_005877.1"/>
</dbReference>
<dbReference type="SMR" id="Q6L150"/>
<dbReference type="FunCoup" id="Q6L150">
    <property type="interactions" value="157"/>
</dbReference>
<dbReference type="STRING" id="263820.PTO0717"/>
<dbReference type="PaxDb" id="263820-PTO0717"/>
<dbReference type="GeneID" id="2845296"/>
<dbReference type="KEGG" id="pto:PTO0717"/>
<dbReference type="PATRIC" id="fig|263820.9.peg.752"/>
<dbReference type="eggNOG" id="arCOG04277">
    <property type="taxonomic scope" value="Archaea"/>
</dbReference>
<dbReference type="HOGENOM" id="CLU_102600_3_0_2"/>
<dbReference type="InParanoid" id="Q6L150"/>
<dbReference type="OrthoDB" id="23689at2157"/>
<dbReference type="Proteomes" id="UP000000438">
    <property type="component" value="Chromosome"/>
</dbReference>
<dbReference type="GO" id="GO:0005737">
    <property type="term" value="C:cytoplasm"/>
    <property type="evidence" value="ECO:0007669"/>
    <property type="project" value="UniProtKB-SubCell"/>
</dbReference>
<dbReference type="GO" id="GO:0043022">
    <property type="term" value="F:ribosome binding"/>
    <property type="evidence" value="ECO:0007669"/>
    <property type="project" value="InterPro"/>
</dbReference>
<dbReference type="GO" id="GO:0003723">
    <property type="term" value="F:RNA binding"/>
    <property type="evidence" value="ECO:0007669"/>
    <property type="project" value="InterPro"/>
</dbReference>
<dbReference type="GO" id="GO:0003746">
    <property type="term" value="F:translation elongation factor activity"/>
    <property type="evidence" value="ECO:0007669"/>
    <property type="project" value="InterPro"/>
</dbReference>
<dbReference type="GO" id="GO:0003743">
    <property type="term" value="F:translation initiation factor activity"/>
    <property type="evidence" value="ECO:0007669"/>
    <property type="project" value="UniProtKB-UniRule"/>
</dbReference>
<dbReference type="GO" id="GO:0045901">
    <property type="term" value="P:positive regulation of translational elongation"/>
    <property type="evidence" value="ECO:0007669"/>
    <property type="project" value="InterPro"/>
</dbReference>
<dbReference type="GO" id="GO:0045905">
    <property type="term" value="P:positive regulation of translational termination"/>
    <property type="evidence" value="ECO:0007669"/>
    <property type="project" value="InterPro"/>
</dbReference>
<dbReference type="CDD" id="cd04467">
    <property type="entry name" value="S1_aIF5A"/>
    <property type="match status" value="1"/>
</dbReference>
<dbReference type="Gene3D" id="2.30.30.30">
    <property type="match status" value="1"/>
</dbReference>
<dbReference type="Gene3D" id="2.40.50.140">
    <property type="entry name" value="Nucleic acid-binding proteins"/>
    <property type="match status" value="1"/>
</dbReference>
<dbReference type="HAMAP" id="MF_00085">
    <property type="entry name" value="eIF_5A"/>
    <property type="match status" value="1"/>
</dbReference>
<dbReference type="InterPro" id="IPR001884">
    <property type="entry name" value="IF5A-like"/>
</dbReference>
<dbReference type="InterPro" id="IPR048670">
    <property type="entry name" value="IF5A-like_N"/>
</dbReference>
<dbReference type="InterPro" id="IPR012340">
    <property type="entry name" value="NA-bd_OB-fold"/>
</dbReference>
<dbReference type="InterPro" id="IPR014722">
    <property type="entry name" value="Rib_uL2_dom2"/>
</dbReference>
<dbReference type="InterPro" id="IPR019769">
    <property type="entry name" value="Trans_elong_IF5A_hypusine_site"/>
</dbReference>
<dbReference type="InterPro" id="IPR022847">
    <property type="entry name" value="Transl_elong_IF5A_arc"/>
</dbReference>
<dbReference type="InterPro" id="IPR020189">
    <property type="entry name" value="Transl_elong_IF5A_C"/>
</dbReference>
<dbReference type="InterPro" id="IPR008991">
    <property type="entry name" value="Translation_prot_SH3-like_sf"/>
</dbReference>
<dbReference type="NCBIfam" id="TIGR00037">
    <property type="entry name" value="eIF_5A"/>
    <property type="match status" value="1"/>
</dbReference>
<dbReference type="NCBIfam" id="NF003076">
    <property type="entry name" value="PRK03999.1"/>
    <property type="match status" value="1"/>
</dbReference>
<dbReference type="PANTHER" id="PTHR11673">
    <property type="entry name" value="TRANSLATION INITIATION FACTOR 5A FAMILY MEMBER"/>
    <property type="match status" value="1"/>
</dbReference>
<dbReference type="Pfam" id="PF21485">
    <property type="entry name" value="IF5A-like_N"/>
    <property type="match status" value="1"/>
</dbReference>
<dbReference type="PIRSF" id="PIRSF003025">
    <property type="entry name" value="eIF5A"/>
    <property type="match status" value="1"/>
</dbReference>
<dbReference type="SMART" id="SM01376">
    <property type="entry name" value="eIF-5a"/>
    <property type="match status" value="1"/>
</dbReference>
<dbReference type="SUPFAM" id="SSF50249">
    <property type="entry name" value="Nucleic acid-binding proteins"/>
    <property type="match status" value="1"/>
</dbReference>
<dbReference type="SUPFAM" id="SSF50104">
    <property type="entry name" value="Translation proteins SH3-like domain"/>
    <property type="match status" value="1"/>
</dbReference>
<dbReference type="PROSITE" id="PS00302">
    <property type="entry name" value="IF5A_HYPUSINE"/>
    <property type="match status" value="1"/>
</dbReference>
<proteinExistence type="inferred from homology"/>
<feature type="chain" id="PRO_0000142497" description="Translation initiation factor 5A">
    <location>
        <begin position="1"/>
        <end position="129"/>
    </location>
</feature>
<feature type="modified residue" description="Hypusine" evidence="1">
    <location>
        <position position="36"/>
    </location>
</feature>